<name>STING_MAGGI</name>
<evidence type="ECO:0000250" key="1">
    <source>
        <dbReference type="UniProtKB" id="A7SLZ2"/>
    </source>
</evidence>
<evidence type="ECO:0000255" key="2">
    <source>
        <dbReference type="PROSITE-ProRule" id="PRU00204"/>
    </source>
</evidence>
<evidence type="ECO:0000256" key="3">
    <source>
        <dbReference type="SAM" id="MobiDB-lite"/>
    </source>
</evidence>
<evidence type="ECO:0000269" key="4">
    <source>
    </source>
</evidence>
<evidence type="ECO:0000303" key="5">
    <source>
    </source>
</evidence>
<evidence type="ECO:0000305" key="6"/>
<evidence type="ECO:0000305" key="7">
    <source>
    </source>
</evidence>
<evidence type="ECO:0007744" key="8">
    <source>
        <dbReference type="PDB" id="6WT6"/>
    </source>
</evidence>
<evidence type="ECO:0007744" key="9">
    <source>
        <dbReference type="PDB" id="6WT7"/>
    </source>
</evidence>
<evidence type="ECO:0007829" key="10">
    <source>
        <dbReference type="PDB" id="6WT6"/>
    </source>
</evidence>
<evidence type="ECO:0007829" key="11">
    <source>
        <dbReference type="PDB" id="6WT7"/>
    </source>
</evidence>
<proteinExistence type="evidence at protein level"/>
<reference evidence="8 9" key="1">
    <citation type="journal article" date="2020" name="Nature">
        <title>STING cyclic dinucleotide sensing originated in bacteria.</title>
        <authorList>
            <person name="Morehouse B.R."/>
            <person name="Govande A.A."/>
            <person name="Millman A."/>
            <person name="Keszei A.F.A."/>
            <person name="Lowey B."/>
            <person name="Ofir G."/>
            <person name="Shao S."/>
            <person name="Sorek R."/>
            <person name="Kranzusch P.J."/>
        </authorList>
    </citation>
    <scope>X-RAY CRYSTALLOGRAPHY (2.41 ANGSTROMS) OF 2-415</scope>
    <scope>X-RAY CRYSTALLOGRAPHY (2.90 ANGSTROMS) OF 2-415 IN COMPLEX WITH 2'3'-CGAMP</scope>
    <scope>NUCLEOTIDE-BINDING</scope>
    <scope>SUBUNIT</scope>
    <scope>DOMAIN</scope>
</reference>
<keyword id="KW-0002">3D-structure</keyword>
<keyword id="KW-0072">Autophagy</keyword>
<keyword id="KW-0378">Hydrolase</keyword>
<keyword id="KW-0391">Immunity</keyword>
<keyword id="KW-0520">NAD</keyword>
<keyword id="KW-0547">Nucleotide-binding</keyword>
<keyword id="KW-1185">Reference proteome</keyword>
<feature type="chain" id="PRO_0000451875" description="Stimulator of interferon genes protein">
    <location>
        <begin position="1"/>
        <end position="415"/>
    </location>
</feature>
<feature type="domain" description="TIR" evidence="2">
    <location>
        <begin position="29"/>
        <end position="163"/>
    </location>
</feature>
<feature type="region of interest" description="Disordered" evidence="3">
    <location>
        <begin position="387"/>
        <end position="415"/>
    </location>
</feature>
<feature type="compositionally biased region" description="Basic and acidic residues" evidence="3">
    <location>
        <begin position="401"/>
        <end position="415"/>
    </location>
</feature>
<feature type="active site" evidence="2 7">
    <location>
        <position position="104"/>
    </location>
</feature>
<feature type="binding site" evidence="9">
    <location>
        <position position="256"/>
    </location>
    <ligand>
        <name>2',3'-cGAMP</name>
        <dbReference type="ChEBI" id="CHEBI:143093"/>
    </ligand>
</feature>
<feature type="sequence conflict" description="In Ref. 1." evidence="6" ref="1">
    <original>K</original>
    <variation>R</variation>
    <location>
        <position position="344"/>
    </location>
</feature>
<feature type="sequence conflict" description="In Ref. 1." evidence="6" ref="1">
    <original>P</original>
    <variation>S</variation>
    <location>
        <position position="389"/>
    </location>
</feature>
<feature type="strand" evidence="10">
    <location>
        <begin position="31"/>
        <end position="36"/>
    </location>
</feature>
<feature type="turn" evidence="10">
    <location>
        <begin position="39"/>
        <end position="42"/>
    </location>
</feature>
<feature type="helix" evidence="10">
    <location>
        <begin position="43"/>
        <end position="56"/>
    </location>
</feature>
<feature type="strand" evidence="10">
    <location>
        <begin position="60"/>
        <end position="62"/>
    </location>
</feature>
<feature type="helix" evidence="10">
    <location>
        <begin position="63"/>
        <end position="66"/>
    </location>
</feature>
<feature type="helix" evidence="10">
    <location>
        <begin position="74"/>
        <end position="82"/>
    </location>
</feature>
<feature type="strand" evidence="10">
    <location>
        <begin position="84"/>
        <end position="91"/>
    </location>
</feature>
<feature type="helix" evidence="10">
    <location>
        <begin position="93"/>
        <end position="97"/>
    </location>
</feature>
<feature type="helix" evidence="10">
    <location>
        <begin position="100"/>
        <end position="102"/>
    </location>
</feature>
<feature type="helix" evidence="10">
    <location>
        <begin position="104"/>
        <end position="108"/>
    </location>
</feature>
<feature type="helix" evidence="10">
    <location>
        <begin position="113"/>
        <end position="119"/>
    </location>
</feature>
<feature type="strand" evidence="10">
    <location>
        <begin position="120"/>
        <end position="124"/>
    </location>
</feature>
<feature type="helix" evidence="10">
    <location>
        <begin position="130"/>
        <end position="132"/>
    </location>
</feature>
<feature type="turn" evidence="10">
    <location>
        <begin position="135"/>
        <end position="137"/>
    </location>
</feature>
<feature type="helix" evidence="10">
    <location>
        <begin position="138"/>
        <end position="140"/>
    </location>
</feature>
<feature type="helix" evidence="10">
    <location>
        <begin position="153"/>
        <end position="159"/>
    </location>
</feature>
<feature type="helix" evidence="10">
    <location>
        <begin position="176"/>
        <end position="186"/>
    </location>
</feature>
<feature type="helix" evidence="10">
    <location>
        <begin position="188"/>
        <end position="204"/>
    </location>
</feature>
<feature type="turn" evidence="10">
    <location>
        <begin position="205"/>
        <end position="207"/>
    </location>
</feature>
<feature type="strand" evidence="10">
    <location>
        <begin position="211"/>
        <end position="221"/>
    </location>
</feature>
<feature type="helix" evidence="10">
    <location>
        <begin position="230"/>
        <end position="233"/>
    </location>
</feature>
<feature type="strand" evidence="10">
    <location>
        <begin position="237"/>
        <end position="243"/>
    </location>
</feature>
<feature type="strand" evidence="11">
    <location>
        <begin position="246"/>
        <end position="250"/>
    </location>
</feature>
<feature type="strand" evidence="11">
    <location>
        <begin position="253"/>
        <end position="258"/>
    </location>
</feature>
<feature type="strand" evidence="10">
    <location>
        <begin position="260"/>
        <end position="266"/>
    </location>
</feature>
<feature type="strand" evidence="10">
    <location>
        <begin position="272"/>
        <end position="279"/>
    </location>
</feature>
<feature type="helix" evidence="10">
    <location>
        <begin position="281"/>
        <end position="283"/>
    </location>
</feature>
<feature type="helix" evidence="10">
    <location>
        <begin position="284"/>
        <end position="291"/>
    </location>
</feature>
<feature type="strand" evidence="10">
    <location>
        <begin position="293"/>
        <end position="295"/>
    </location>
</feature>
<feature type="helix" evidence="10">
    <location>
        <begin position="299"/>
        <end position="319"/>
    </location>
</feature>
<feature type="turn" evidence="10">
    <location>
        <begin position="321"/>
        <end position="325"/>
    </location>
</feature>
<feature type="strand" evidence="10">
    <location>
        <begin position="326"/>
        <end position="332"/>
    </location>
</feature>
<feature type="helix" evidence="10">
    <location>
        <begin position="341"/>
        <end position="356"/>
    </location>
</feature>
<sequence>MEKNGAHSFLSDTPVTSLTMSVPVLRHPHVYHAFISYCADADTSHARTILDSVESRGFTCCFAERDFLPGECTSDVVVDAIHCSKNVILVISPASLQSEWSKFEMLMAVDDSHQRNNVCLVPVLLGGVKVDDLPPPLRPLTCIELMDDFRNTDDIIQAISKPEDTWESLLPVGNLAHGFAWGYYYGYLKIILPDLDKTVRQWRRVNNAEGRMSEKLFLFFPQSCRCRDSIADESSLIKHRGHLPIITKDRAGIIERQYKNTIYSVTDDNGEDYFFAGEYIGVIHTMFEMEQNATTGLQTREKYVQSMRFYLTLKRILDTDPECSKKCKIVFYKDVNNSSDAMPKLICNEIKNQLRKESSDDTTVCMTPFNSPFPSISSPDFARCSLKSPSSTNMVKSEPNIYREESGKTKSVERG</sequence>
<protein>
    <recommendedName>
        <fullName evidence="6">Stimulator of interferon genes protein</fullName>
        <shortName evidence="5">TIR-STING</shortName>
    </recommendedName>
    <alternativeName>
        <fullName evidence="2">Probable NAD(+) hydrolase</fullName>
        <ecNumber evidence="2">3.2.2.6</ecNumber>
    </alternativeName>
</protein>
<accession>P0DUE1</accession>
<dbReference type="EC" id="3.2.2.6" evidence="2"/>
<dbReference type="PDB" id="6WT6">
    <property type="method" value="X-ray"/>
    <property type="resolution" value="2.41 A"/>
    <property type="chains" value="A=2-415"/>
</dbReference>
<dbReference type="PDB" id="6WT7">
    <property type="method" value="X-ray"/>
    <property type="resolution" value="2.90 A"/>
    <property type="chains" value="A=2-415"/>
</dbReference>
<dbReference type="PDBsum" id="6WT6"/>
<dbReference type="PDBsum" id="6WT7"/>
<dbReference type="SMR" id="P0DUE1"/>
<dbReference type="InParanoid" id="P0DUE1"/>
<dbReference type="Proteomes" id="UP000005408">
    <property type="component" value="Unplaced"/>
</dbReference>
<dbReference type="GO" id="GO:0005776">
    <property type="term" value="C:autophagosome"/>
    <property type="evidence" value="ECO:0007669"/>
    <property type="project" value="TreeGrafter"/>
</dbReference>
<dbReference type="GO" id="GO:0005789">
    <property type="term" value="C:endoplasmic reticulum membrane"/>
    <property type="evidence" value="ECO:0007669"/>
    <property type="project" value="TreeGrafter"/>
</dbReference>
<dbReference type="GO" id="GO:0061507">
    <property type="term" value="F:2',3'-cyclic GMP-AMP binding"/>
    <property type="evidence" value="ECO:0007669"/>
    <property type="project" value="TreeGrafter"/>
</dbReference>
<dbReference type="GO" id="GO:0035438">
    <property type="term" value="F:cyclic-di-GMP binding"/>
    <property type="evidence" value="ECO:0007669"/>
    <property type="project" value="TreeGrafter"/>
</dbReference>
<dbReference type="GO" id="GO:0061809">
    <property type="term" value="F:NAD+ nucleosidase activity, cyclic ADP-ribose generating"/>
    <property type="evidence" value="ECO:0007669"/>
    <property type="project" value="UniProtKB-EC"/>
</dbReference>
<dbReference type="GO" id="GO:0002218">
    <property type="term" value="P:activation of innate immune response"/>
    <property type="evidence" value="ECO:0007669"/>
    <property type="project" value="InterPro"/>
</dbReference>
<dbReference type="GO" id="GO:0000045">
    <property type="term" value="P:autophagosome assembly"/>
    <property type="evidence" value="ECO:0007669"/>
    <property type="project" value="TreeGrafter"/>
</dbReference>
<dbReference type="GO" id="GO:0045087">
    <property type="term" value="P:innate immune response"/>
    <property type="evidence" value="ECO:0007669"/>
    <property type="project" value="TreeGrafter"/>
</dbReference>
<dbReference type="GO" id="GO:0016239">
    <property type="term" value="P:positive regulation of macroautophagy"/>
    <property type="evidence" value="ECO:0007669"/>
    <property type="project" value="TreeGrafter"/>
</dbReference>
<dbReference type="GO" id="GO:0032481">
    <property type="term" value="P:positive regulation of type I interferon production"/>
    <property type="evidence" value="ECO:0007669"/>
    <property type="project" value="InterPro"/>
</dbReference>
<dbReference type="GO" id="GO:0061709">
    <property type="term" value="P:reticulophagy"/>
    <property type="evidence" value="ECO:0007669"/>
    <property type="project" value="TreeGrafter"/>
</dbReference>
<dbReference type="GO" id="GO:0007165">
    <property type="term" value="P:signal transduction"/>
    <property type="evidence" value="ECO:0007669"/>
    <property type="project" value="InterPro"/>
</dbReference>
<dbReference type="CDD" id="cd22658">
    <property type="entry name" value="STING_C_metazoan-like"/>
    <property type="match status" value="1"/>
</dbReference>
<dbReference type="Gene3D" id="1.20.5.5200">
    <property type="match status" value="1"/>
</dbReference>
<dbReference type="Gene3D" id="3.40.50.12100">
    <property type="entry name" value="Stimulator of interferon genes protein"/>
    <property type="match status" value="1"/>
</dbReference>
<dbReference type="Gene3D" id="3.40.50.10140">
    <property type="entry name" value="Toll/interleukin-1 receptor homology (TIR) domain"/>
    <property type="match status" value="1"/>
</dbReference>
<dbReference type="InterPro" id="IPR029158">
    <property type="entry name" value="STING"/>
</dbReference>
<dbReference type="InterPro" id="IPR047191">
    <property type="entry name" value="STING_C_chordates"/>
</dbReference>
<dbReference type="InterPro" id="IPR038623">
    <property type="entry name" value="STING_C_sf"/>
</dbReference>
<dbReference type="InterPro" id="IPR055432">
    <property type="entry name" value="STING_LBD"/>
</dbReference>
<dbReference type="InterPro" id="IPR000157">
    <property type="entry name" value="TIR_dom"/>
</dbReference>
<dbReference type="InterPro" id="IPR035897">
    <property type="entry name" value="Toll_tir_struct_dom_sf"/>
</dbReference>
<dbReference type="PANTHER" id="PTHR34339">
    <property type="entry name" value="STIMULATOR OF INTERFERON GENES PROTEIN"/>
    <property type="match status" value="1"/>
</dbReference>
<dbReference type="PANTHER" id="PTHR34339:SF1">
    <property type="entry name" value="STIMULATOR OF INTERFERON GENES PROTEIN"/>
    <property type="match status" value="1"/>
</dbReference>
<dbReference type="Pfam" id="PF15009">
    <property type="entry name" value="STING_LBD"/>
    <property type="match status" value="1"/>
</dbReference>
<dbReference type="Pfam" id="PF13676">
    <property type="entry name" value="TIR_2"/>
    <property type="match status" value="1"/>
</dbReference>
<dbReference type="SMART" id="SM00255">
    <property type="entry name" value="TIR"/>
    <property type="match status" value="1"/>
</dbReference>
<dbReference type="SUPFAM" id="SSF52200">
    <property type="entry name" value="Toll/Interleukin receptor TIR domain"/>
    <property type="match status" value="1"/>
</dbReference>
<dbReference type="PROSITE" id="PS50104">
    <property type="entry name" value="TIR"/>
    <property type="match status" value="1"/>
</dbReference>
<comment type="function">
    <text evidence="1 4">Sensor of cytosolic DNA from bacteria and viruses that promotes autophagy (By similarity). Binds c-di-AMP, 2'3'-cGAMP, 3'3'-cGAMP and to a lesser extent c-di-GMP. Nucleotide binding has not been seen to stimulate NAD(+) hydrolase activity (PubMed:32877915).</text>
</comment>
<comment type="catalytic activity">
    <reaction evidence="2">
        <text>NAD(+) + H2O = ADP-D-ribose + nicotinamide + H(+)</text>
        <dbReference type="Rhea" id="RHEA:16301"/>
        <dbReference type="ChEBI" id="CHEBI:15377"/>
        <dbReference type="ChEBI" id="CHEBI:15378"/>
        <dbReference type="ChEBI" id="CHEBI:17154"/>
        <dbReference type="ChEBI" id="CHEBI:57540"/>
        <dbReference type="ChEBI" id="CHEBI:57967"/>
        <dbReference type="EC" id="3.2.2.6"/>
    </reaction>
    <physiologicalReaction direction="left-to-right" evidence="2">
        <dbReference type="Rhea" id="RHEA:16302"/>
    </physiologicalReaction>
</comment>
<comment type="subunit">
    <text evidence="4">Homodimer.</text>
</comment>
<comment type="domain">
    <text evidence="2 4">Homodimerizes by swapping the N-terminal TIR and C-terminal nucleotide-binding domains. Ligand binding induces lid closure and repositions the TIR domain (PubMed:32877915). The TIR domain mediates NAD(+) hydrolase (NADase) activity. Self-association of TIR domains is required for NADase activity (By similarity).</text>
</comment>
<comment type="similarity">
    <text evidence="6">In the N-terminal section; belongs to the Toll-like receptor family.</text>
</comment>
<comment type="similarity">
    <text evidence="6">In the C-terminal section; belongs to the TMEM173 family.</text>
</comment>
<organism>
    <name type="scientific">Magallana gigas</name>
    <name type="common">Pacific oyster</name>
    <name type="synonym">Crassostrea gigas</name>
    <dbReference type="NCBI Taxonomy" id="29159"/>
    <lineage>
        <taxon>Eukaryota</taxon>
        <taxon>Metazoa</taxon>
        <taxon>Spiralia</taxon>
        <taxon>Lophotrochozoa</taxon>
        <taxon>Mollusca</taxon>
        <taxon>Bivalvia</taxon>
        <taxon>Autobranchia</taxon>
        <taxon>Pteriomorphia</taxon>
        <taxon>Ostreida</taxon>
        <taxon>Ostreoidea</taxon>
        <taxon>Ostreidae</taxon>
        <taxon>Magallana</taxon>
    </lineage>
</organism>